<protein>
    <recommendedName>
        <fullName>Uncharacterized protein BBD22</fullName>
    </recommendedName>
</protein>
<feature type="chain" id="PRO_0000174427" description="Uncharacterized protein BBD22">
    <location>
        <begin position="1"/>
        <end position="89"/>
    </location>
</feature>
<gene>
    <name type="ordered locus">BB_D22</name>
    <name type="ORF">CdsN</name>
</gene>
<accession>P70844</accession>
<sequence length="89" mass="10331">MPISKEVNLEEIIKQNVSKSKFAFRDNDVISNNIPNVKPIRSKMTIKQISVGLKYEYWIEFYSILDKKGLTASGFIRTLIMEYIEASKK</sequence>
<dbReference type="EMBL" id="U43414">
    <property type="protein sequence ID" value="AAB38562.1"/>
    <property type="molecule type" value="Genomic_DNA"/>
</dbReference>
<dbReference type="EMBL" id="AE000793">
    <property type="protein sequence ID" value="AAC66347.1"/>
    <property type="molecule type" value="Genomic_DNA"/>
</dbReference>
<dbReference type="PIR" id="A70224">
    <property type="entry name" value="A70224"/>
</dbReference>
<dbReference type="RefSeq" id="NP_045405.1">
    <property type="nucleotide sequence ID" value="NC_001849.2"/>
</dbReference>
<dbReference type="RefSeq" id="NP_862715.1">
    <property type="nucleotide sequence ID" value="NC_004988.1"/>
</dbReference>
<dbReference type="RefSeq" id="WP_010890256.1">
    <property type="nucleotide sequence ID" value="NC_001849.2"/>
</dbReference>
<dbReference type="SMR" id="P70844"/>
<dbReference type="EnsemblBacteria" id="AAC66347">
    <property type="protein sequence ID" value="AAC66347"/>
    <property type="gene ID" value="BB_D22"/>
</dbReference>
<dbReference type="KEGG" id="bbu:BB_D22"/>
<dbReference type="PATRIC" id="fig|224326.49.peg.1264"/>
<dbReference type="HOGENOM" id="CLU_2448747_0_0_12"/>
<dbReference type="OrthoDB" id="352272at2"/>
<dbReference type="PRO" id="PR:P70844"/>
<dbReference type="Proteomes" id="UP000001807">
    <property type="component" value="Plasmid lp17"/>
</dbReference>
<geneLocation type="plasmid">
    <name>lp17 (linear 17 kb)</name>
    <name>lp16</name>
</geneLocation>
<reference key="1">
    <citation type="journal article" date="1996" name="J. Bacteriol.">
        <title>The nucleotide sequence of a linear plasmid of Borrelia burgdorferi reveals similarities to those of circular plasmids of other prokaryotes.</title>
        <authorList>
            <person name="Barbour A.G."/>
            <person name="Carter C.J."/>
            <person name="Bundoc V."/>
            <person name="Hinnebusch J."/>
        </authorList>
    </citation>
    <scope>NUCLEOTIDE SEQUENCE [GENOMIC DNA]</scope>
    <source>
        <strain>ATCC 35210 / DSM 4680 / CIP 102532 / B31</strain>
    </source>
</reference>
<reference key="2">
    <citation type="journal article" date="1997" name="Nature">
        <title>Genomic sequence of a Lyme disease spirochaete, Borrelia burgdorferi.</title>
        <authorList>
            <person name="Fraser C.M."/>
            <person name="Casjens S."/>
            <person name="Huang W.M."/>
            <person name="Sutton G.G."/>
            <person name="Clayton R.A."/>
            <person name="Lathigra R."/>
            <person name="White O."/>
            <person name="Ketchum K.A."/>
            <person name="Dodson R.J."/>
            <person name="Hickey E.K."/>
            <person name="Gwinn M.L."/>
            <person name="Dougherty B.A."/>
            <person name="Tomb J.-F."/>
            <person name="Fleischmann R.D."/>
            <person name="Richardson D.L."/>
            <person name="Peterson J.D."/>
            <person name="Kerlavage A.R."/>
            <person name="Quackenbush J."/>
            <person name="Salzberg S.L."/>
            <person name="Hanson M."/>
            <person name="van Vugt R."/>
            <person name="Palmer N."/>
            <person name="Adams M.D."/>
            <person name="Gocayne J.D."/>
            <person name="Weidman J.F."/>
            <person name="Utterback T.R."/>
            <person name="Watthey L."/>
            <person name="McDonald L.A."/>
            <person name="Artiach P."/>
            <person name="Bowman C."/>
            <person name="Garland S.A."/>
            <person name="Fujii C."/>
            <person name="Cotton M.D."/>
            <person name="Horst K."/>
            <person name="Roberts K.M."/>
            <person name="Hatch B."/>
            <person name="Smith H.O."/>
            <person name="Venter J.C."/>
        </authorList>
    </citation>
    <scope>NUCLEOTIDE SEQUENCE [LARGE SCALE GENOMIC DNA]</scope>
    <source>
        <strain>ATCC 35210 / DSM 4680 / CIP 102532 / B31</strain>
    </source>
</reference>
<proteinExistence type="predicted"/>
<name>Y2822_BORBU</name>
<keyword id="KW-0614">Plasmid</keyword>
<keyword id="KW-1185">Reference proteome</keyword>
<organism>
    <name type="scientific">Borreliella burgdorferi (strain ATCC 35210 / DSM 4680 / CIP 102532 / B31)</name>
    <name type="common">Borrelia burgdorferi</name>
    <dbReference type="NCBI Taxonomy" id="224326"/>
    <lineage>
        <taxon>Bacteria</taxon>
        <taxon>Pseudomonadati</taxon>
        <taxon>Spirochaetota</taxon>
        <taxon>Spirochaetia</taxon>
        <taxon>Spirochaetales</taxon>
        <taxon>Borreliaceae</taxon>
        <taxon>Borreliella</taxon>
    </lineage>
</organism>